<reference key="1">
    <citation type="journal article" date="2009" name="BMC Genomics">
        <title>Genome evolution driven by host adaptations results in a more virulent and antimicrobial-resistant Streptococcus pneumoniae serotype 14.</title>
        <authorList>
            <person name="Ding F."/>
            <person name="Tang P."/>
            <person name="Hsu M.-H."/>
            <person name="Cui P."/>
            <person name="Hu S."/>
            <person name="Yu J."/>
            <person name="Chiu C.-H."/>
        </authorList>
    </citation>
    <scope>NUCLEOTIDE SEQUENCE [LARGE SCALE GENOMIC DNA]</scope>
    <source>
        <strain>CGSP14</strain>
    </source>
</reference>
<evidence type="ECO:0000255" key="1">
    <source>
        <dbReference type="HAMAP-Rule" id="MF_00151"/>
    </source>
</evidence>
<protein>
    <recommendedName>
        <fullName evidence="1">Phosphopantetheine adenylyltransferase</fullName>
        <ecNumber evidence="1">2.7.7.3</ecNumber>
    </recommendedName>
    <alternativeName>
        <fullName evidence="1">Dephospho-CoA pyrophosphorylase</fullName>
    </alternativeName>
    <alternativeName>
        <fullName evidence="1">Pantetheine-phosphate adenylyltransferase</fullName>
        <shortName evidence="1">PPAT</shortName>
    </alternativeName>
</protein>
<gene>
    <name evidence="1" type="primary">coaD</name>
    <name type="ordered locus">SPCG_1932</name>
</gene>
<accession>B2IM47</accession>
<feature type="chain" id="PRO_1000096848" description="Phosphopantetheine adenylyltransferase">
    <location>
        <begin position="1"/>
        <end position="162"/>
    </location>
</feature>
<feature type="binding site" evidence="1">
    <location>
        <begin position="11"/>
        <end position="12"/>
    </location>
    <ligand>
        <name>ATP</name>
        <dbReference type="ChEBI" id="CHEBI:30616"/>
    </ligand>
</feature>
<feature type="binding site" evidence="1">
    <location>
        <position position="11"/>
    </location>
    <ligand>
        <name>substrate</name>
    </ligand>
</feature>
<feature type="binding site" evidence="1">
    <location>
        <position position="19"/>
    </location>
    <ligand>
        <name>ATP</name>
        <dbReference type="ChEBI" id="CHEBI:30616"/>
    </ligand>
</feature>
<feature type="binding site" evidence="1">
    <location>
        <position position="43"/>
    </location>
    <ligand>
        <name>substrate</name>
    </ligand>
</feature>
<feature type="binding site" evidence="1">
    <location>
        <position position="76"/>
    </location>
    <ligand>
        <name>substrate</name>
    </ligand>
</feature>
<feature type="binding site" evidence="1">
    <location>
        <position position="90"/>
    </location>
    <ligand>
        <name>substrate</name>
    </ligand>
</feature>
<feature type="binding site" evidence="1">
    <location>
        <begin position="91"/>
        <end position="93"/>
    </location>
    <ligand>
        <name>ATP</name>
        <dbReference type="ChEBI" id="CHEBI:30616"/>
    </ligand>
</feature>
<feature type="binding site" evidence="1">
    <location>
        <position position="101"/>
    </location>
    <ligand>
        <name>ATP</name>
        <dbReference type="ChEBI" id="CHEBI:30616"/>
    </ligand>
</feature>
<feature type="binding site" evidence="1">
    <location>
        <begin position="126"/>
        <end position="132"/>
    </location>
    <ligand>
        <name>ATP</name>
        <dbReference type="ChEBI" id="CHEBI:30616"/>
    </ligand>
</feature>
<feature type="site" description="Transition state stabilizer" evidence="1">
    <location>
        <position position="19"/>
    </location>
</feature>
<keyword id="KW-0067">ATP-binding</keyword>
<keyword id="KW-0173">Coenzyme A biosynthesis</keyword>
<keyword id="KW-0963">Cytoplasm</keyword>
<keyword id="KW-0460">Magnesium</keyword>
<keyword id="KW-0547">Nucleotide-binding</keyword>
<keyword id="KW-0548">Nucleotidyltransferase</keyword>
<keyword id="KW-0808">Transferase</keyword>
<organism>
    <name type="scientific">Streptococcus pneumoniae (strain CGSP14)</name>
    <dbReference type="NCBI Taxonomy" id="516950"/>
    <lineage>
        <taxon>Bacteria</taxon>
        <taxon>Bacillati</taxon>
        <taxon>Bacillota</taxon>
        <taxon>Bacilli</taxon>
        <taxon>Lactobacillales</taxon>
        <taxon>Streptococcaceae</taxon>
        <taxon>Streptococcus</taxon>
    </lineage>
</organism>
<comment type="function">
    <text evidence="1">Reversibly transfers an adenylyl group from ATP to 4'-phosphopantetheine, yielding dephospho-CoA (dPCoA) and pyrophosphate.</text>
</comment>
<comment type="catalytic activity">
    <reaction evidence="1">
        <text>(R)-4'-phosphopantetheine + ATP + H(+) = 3'-dephospho-CoA + diphosphate</text>
        <dbReference type="Rhea" id="RHEA:19801"/>
        <dbReference type="ChEBI" id="CHEBI:15378"/>
        <dbReference type="ChEBI" id="CHEBI:30616"/>
        <dbReference type="ChEBI" id="CHEBI:33019"/>
        <dbReference type="ChEBI" id="CHEBI:57328"/>
        <dbReference type="ChEBI" id="CHEBI:61723"/>
        <dbReference type="EC" id="2.7.7.3"/>
    </reaction>
</comment>
<comment type="cofactor">
    <cofactor evidence="1">
        <name>Mg(2+)</name>
        <dbReference type="ChEBI" id="CHEBI:18420"/>
    </cofactor>
</comment>
<comment type="pathway">
    <text evidence="1">Cofactor biosynthesis; coenzyme A biosynthesis; CoA from (R)-pantothenate: step 4/5.</text>
</comment>
<comment type="subunit">
    <text evidence="1">Homohexamer.</text>
</comment>
<comment type="subcellular location">
    <subcellularLocation>
        <location evidence="1">Cytoplasm</location>
    </subcellularLocation>
</comment>
<comment type="similarity">
    <text evidence="1">Belongs to the bacterial CoaD family.</text>
</comment>
<name>COAD_STRPS</name>
<dbReference type="EC" id="2.7.7.3" evidence="1"/>
<dbReference type="EMBL" id="CP001033">
    <property type="protein sequence ID" value="ACB91185.1"/>
    <property type="molecule type" value="Genomic_DNA"/>
</dbReference>
<dbReference type="RefSeq" id="WP_001280736.1">
    <property type="nucleotide sequence ID" value="NC_010582.1"/>
</dbReference>
<dbReference type="SMR" id="B2IM47"/>
<dbReference type="KEGG" id="spw:SPCG_1932"/>
<dbReference type="HOGENOM" id="CLU_100149_0_1_9"/>
<dbReference type="UniPathway" id="UPA00241">
    <property type="reaction ID" value="UER00355"/>
</dbReference>
<dbReference type="GO" id="GO:0005737">
    <property type="term" value="C:cytoplasm"/>
    <property type="evidence" value="ECO:0007669"/>
    <property type="project" value="UniProtKB-SubCell"/>
</dbReference>
<dbReference type="GO" id="GO:0005524">
    <property type="term" value="F:ATP binding"/>
    <property type="evidence" value="ECO:0007669"/>
    <property type="project" value="UniProtKB-KW"/>
</dbReference>
<dbReference type="GO" id="GO:0004595">
    <property type="term" value="F:pantetheine-phosphate adenylyltransferase activity"/>
    <property type="evidence" value="ECO:0007669"/>
    <property type="project" value="UniProtKB-UniRule"/>
</dbReference>
<dbReference type="GO" id="GO:0015937">
    <property type="term" value="P:coenzyme A biosynthetic process"/>
    <property type="evidence" value="ECO:0007669"/>
    <property type="project" value="UniProtKB-UniRule"/>
</dbReference>
<dbReference type="CDD" id="cd02163">
    <property type="entry name" value="PPAT"/>
    <property type="match status" value="1"/>
</dbReference>
<dbReference type="Gene3D" id="3.40.50.620">
    <property type="entry name" value="HUPs"/>
    <property type="match status" value="1"/>
</dbReference>
<dbReference type="HAMAP" id="MF_00151">
    <property type="entry name" value="PPAT_bact"/>
    <property type="match status" value="1"/>
</dbReference>
<dbReference type="InterPro" id="IPR004821">
    <property type="entry name" value="Cyt_trans-like"/>
</dbReference>
<dbReference type="InterPro" id="IPR001980">
    <property type="entry name" value="PPAT"/>
</dbReference>
<dbReference type="InterPro" id="IPR014729">
    <property type="entry name" value="Rossmann-like_a/b/a_fold"/>
</dbReference>
<dbReference type="NCBIfam" id="TIGR01510">
    <property type="entry name" value="coaD_prev_kdtB"/>
    <property type="match status" value="1"/>
</dbReference>
<dbReference type="NCBIfam" id="TIGR00125">
    <property type="entry name" value="cyt_tran_rel"/>
    <property type="match status" value="1"/>
</dbReference>
<dbReference type="PANTHER" id="PTHR21342">
    <property type="entry name" value="PHOSPHOPANTETHEINE ADENYLYLTRANSFERASE"/>
    <property type="match status" value="1"/>
</dbReference>
<dbReference type="PANTHER" id="PTHR21342:SF1">
    <property type="entry name" value="PHOSPHOPANTETHEINE ADENYLYLTRANSFERASE"/>
    <property type="match status" value="1"/>
</dbReference>
<dbReference type="Pfam" id="PF01467">
    <property type="entry name" value="CTP_transf_like"/>
    <property type="match status" value="1"/>
</dbReference>
<dbReference type="PRINTS" id="PR01020">
    <property type="entry name" value="LPSBIOSNTHSS"/>
</dbReference>
<dbReference type="SUPFAM" id="SSF52374">
    <property type="entry name" value="Nucleotidylyl transferase"/>
    <property type="match status" value="1"/>
</dbReference>
<proteinExistence type="inferred from homology"/>
<sequence length="162" mass="18481">MSDKIGLFTGSFDPMTNGHLDIIERASRLFDKLYVGIFFNPHKQGFLPIENRKRGLEKAVKHLGNVKVVSSHDELVVDVAKRLGATCLVRGLRNASDLQYEASFDYYNHQLSPDIETIYLHSRPEHLYISSSGVRELLKFGQDIACYVPESILEEIRNEKKD</sequence>